<organism>
    <name type="scientific">Chlamydia muridarum (strain MoPn / Nigg)</name>
    <dbReference type="NCBI Taxonomy" id="243161"/>
    <lineage>
        <taxon>Bacteria</taxon>
        <taxon>Pseudomonadati</taxon>
        <taxon>Chlamydiota</taxon>
        <taxon>Chlamydiia</taxon>
        <taxon>Chlamydiales</taxon>
        <taxon>Chlamydiaceae</taxon>
        <taxon>Chlamydia/Chlamydophila group</taxon>
        <taxon>Chlamydia</taxon>
    </lineage>
</organism>
<keyword id="KW-0687">Ribonucleoprotein</keyword>
<keyword id="KW-0689">Ribosomal protein</keyword>
<comment type="similarity">
    <text evidence="1">Belongs to the bacterial ribosomal protein bL28 family.</text>
</comment>
<accession>Q9PKV0</accession>
<protein>
    <recommendedName>
        <fullName evidence="1">Large ribosomal subunit protein bL28</fullName>
    </recommendedName>
    <alternativeName>
        <fullName evidence="2">50S ribosomal protein L28</fullName>
    </alternativeName>
</protein>
<feature type="chain" id="PRO_0000178454" description="Large ribosomal subunit protein bL28">
    <location>
        <begin position="1"/>
        <end position="89"/>
    </location>
</feature>
<sequence>MSKKCALTGRKPRRGYSYAIRGISKKKKGIGLKVTGRTKRRFLPNMMTKRLWSTEENRFLKLKISAAALRLVDKLGLDKVVARAKSKGF</sequence>
<reference key="1">
    <citation type="journal article" date="2000" name="Nucleic Acids Res.">
        <title>Genome sequences of Chlamydia trachomatis MoPn and Chlamydia pneumoniae AR39.</title>
        <authorList>
            <person name="Read T.D."/>
            <person name="Brunham R.C."/>
            <person name="Shen C."/>
            <person name="Gill S.R."/>
            <person name="Heidelberg J.F."/>
            <person name="White O."/>
            <person name="Hickey E.K."/>
            <person name="Peterson J.D."/>
            <person name="Utterback T.R."/>
            <person name="Berry K.J."/>
            <person name="Bass S."/>
            <person name="Linher K.D."/>
            <person name="Weidman J.F."/>
            <person name="Khouri H.M."/>
            <person name="Craven B."/>
            <person name="Bowman C."/>
            <person name="Dodson R.J."/>
            <person name="Gwinn M.L."/>
            <person name="Nelson W.C."/>
            <person name="DeBoy R.T."/>
            <person name="Kolonay J.F."/>
            <person name="McClarty G."/>
            <person name="Salzberg S.L."/>
            <person name="Eisen J.A."/>
            <person name="Fraser C.M."/>
        </authorList>
    </citation>
    <scope>NUCLEOTIDE SEQUENCE [LARGE SCALE GENOMIC DNA]</scope>
    <source>
        <strain>MoPn / Nigg</strain>
    </source>
</reference>
<proteinExistence type="inferred from homology"/>
<gene>
    <name evidence="1" type="primary">rpmB</name>
    <name type="ordered locus">TC_0361</name>
</gene>
<name>RL28_CHLMU</name>
<dbReference type="EMBL" id="AE002160">
    <property type="protein sequence ID" value="AAF39222.1"/>
    <property type="molecule type" value="Genomic_DNA"/>
</dbReference>
<dbReference type="PIR" id="H81711">
    <property type="entry name" value="H81711"/>
</dbReference>
<dbReference type="RefSeq" id="WP_010230244.1">
    <property type="nucleotide sequence ID" value="NZ_CP063055.1"/>
</dbReference>
<dbReference type="SMR" id="Q9PKV0"/>
<dbReference type="GeneID" id="1245714"/>
<dbReference type="KEGG" id="cmu:TC_0361"/>
<dbReference type="eggNOG" id="COG0227">
    <property type="taxonomic scope" value="Bacteria"/>
</dbReference>
<dbReference type="HOGENOM" id="CLU_064548_3_2_0"/>
<dbReference type="OrthoDB" id="9805609at2"/>
<dbReference type="Proteomes" id="UP000000800">
    <property type="component" value="Chromosome"/>
</dbReference>
<dbReference type="GO" id="GO:1990904">
    <property type="term" value="C:ribonucleoprotein complex"/>
    <property type="evidence" value="ECO:0007669"/>
    <property type="project" value="UniProtKB-KW"/>
</dbReference>
<dbReference type="GO" id="GO:0005840">
    <property type="term" value="C:ribosome"/>
    <property type="evidence" value="ECO:0007669"/>
    <property type="project" value="UniProtKB-KW"/>
</dbReference>
<dbReference type="GO" id="GO:0003735">
    <property type="term" value="F:structural constituent of ribosome"/>
    <property type="evidence" value="ECO:0007669"/>
    <property type="project" value="InterPro"/>
</dbReference>
<dbReference type="GO" id="GO:0006412">
    <property type="term" value="P:translation"/>
    <property type="evidence" value="ECO:0007669"/>
    <property type="project" value="UniProtKB-UniRule"/>
</dbReference>
<dbReference type="FunFam" id="2.30.170.40:FF:000010">
    <property type="entry name" value="50S ribosomal protein L28"/>
    <property type="match status" value="1"/>
</dbReference>
<dbReference type="Gene3D" id="2.30.170.40">
    <property type="entry name" value="Ribosomal protein L28/L24"/>
    <property type="match status" value="1"/>
</dbReference>
<dbReference type="HAMAP" id="MF_00373">
    <property type="entry name" value="Ribosomal_bL28"/>
    <property type="match status" value="1"/>
</dbReference>
<dbReference type="InterPro" id="IPR026569">
    <property type="entry name" value="Ribosomal_bL28"/>
</dbReference>
<dbReference type="InterPro" id="IPR034704">
    <property type="entry name" value="Ribosomal_bL28/bL31-like_sf"/>
</dbReference>
<dbReference type="InterPro" id="IPR001383">
    <property type="entry name" value="Ribosomal_bL28_bact-type"/>
</dbReference>
<dbReference type="InterPro" id="IPR037147">
    <property type="entry name" value="Ribosomal_bL28_sf"/>
</dbReference>
<dbReference type="NCBIfam" id="TIGR00009">
    <property type="entry name" value="L28"/>
    <property type="match status" value="1"/>
</dbReference>
<dbReference type="PANTHER" id="PTHR13528">
    <property type="entry name" value="39S RIBOSOMAL PROTEIN L28, MITOCHONDRIAL"/>
    <property type="match status" value="1"/>
</dbReference>
<dbReference type="PANTHER" id="PTHR13528:SF2">
    <property type="entry name" value="LARGE RIBOSOMAL SUBUNIT PROTEIN BL28M"/>
    <property type="match status" value="1"/>
</dbReference>
<dbReference type="Pfam" id="PF00830">
    <property type="entry name" value="Ribosomal_L28"/>
    <property type="match status" value="1"/>
</dbReference>
<dbReference type="SUPFAM" id="SSF143800">
    <property type="entry name" value="L28p-like"/>
    <property type="match status" value="1"/>
</dbReference>
<evidence type="ECO:0000255" key="1">
    <source>
        <dbReference type="HAMAP-Rule" id="MF_00373"/>
    </source>
</evidence>
<evidence type="ECO:0000305" key="2"/>